<organism>
    <name type="scientific">Clostridium tetani (strain Massachusetts / E88)</name>
    <dbReference type="NCBI Taxonomy" id="212717"/>
    <lineage>
        <taxon>Bacteria</taxon>
        <taxon>Bacillati</taxon>
        <taxon>Bacillota</taxon>
        <taxon>Clostridia</taxon>
        <taxon>Eubacteriales</taxon>
        <taxon>Clostridiaceae</taxon>
        <taxon>Clostridium</taxon>
    </lineage>
</organism>
<comment type="function">
    <text evidence="1">Binds to the 23S rRNA.</text>
</comment>
<comment type="similarity">
    <text evidence="1">Belongs to the bacterial ribosomal protein bL9 family.</text>
</comment>
<feature type="chain" id="PRO_0000236508" description="Large ribosomal subunit protein bL9">
    <location>
        <begin position="1"/>
        <end position="147"/>
    </location>
</feature>
<reference key="1">
    <citation type="journal article" date="2003" name="Proc. Natl. Acad. Sci. U.S.A.">
        <title>The genome sequence of Clostridium tetani, the causative agent of tetanus disease.</title>
        <authorList>
            <person name="Brueggemann H."/>
            <person name="Baeumer S."/>
            <person name="Fricke W.F."/>
            <person name="Wiezer A."/>
            <person name="Liesegang H."/>
            <person name="Decker I."/>
            <person name="Herzberg C."/>
            <person name="Martinez-Arias R."/>
            <person name="Merkl R."/>
            <person name="Henne A."/>
            <person name="Gottschalk G."/>
        </authorList>
    </citation>
    <scope>NUCLEOTIDE SEQUENCE [LARGE SCALE GENOMIC DNA]</scope>
    <source>
        <strain>Massachusetts / E88</strain>
    </source>
</reference>
<name>RL9_CLOTE</name>
<evidence type="ECO:0000255" key="1">
    <source>
        <dbReference type="HAMAP-Rule" id="MF_00503"/>
    </source>
</evidence>
<evidence type="ECO:0000305" key="2"/>
<accession>Q899Q8</accession>
<gene>
    <name evidence="1" type="primary">rplI</name>
    <name type="ordered locus">CTC_00112</name>
</gene>
<protein>
    <recommendedName>
        <fullName evidence="1">Large ribosomal subunit protein bL9</fullName>
    </recommendedName>
    <alternativeName>
        <fullName evidence="2">50S ribosomal protein L9</fullName>
    </alternativeName>
</protein>
<proteinExistence type="inferred from homology"/>
<sequence length="147" mass="16896">MKVILLKDVKKLGKKDDVVNVSDGYARNFLFPRKLALEAKESNLNLLNNKKEAERKQKLAELEEAQKLAEELKNQELILKVKSGDNGKLFGSITGKDISDELKKKFKLDIDRRKINVENIRQLGVYDVEIKLYPEVSTKIKVKIEDI</sequence>
<dbReference type="EMBL" id="AE015927">
    <property type="protein sequence ID" value="AAO34764.1"/>
    <property type="molecule type" value="Genomic_DNA"/>
</dbReference>
<dbReference type="RefSeq" id="WP_011098436.1">
    <property type="nucleotide sequence ID" value="NC_004557.1"/>
</dbReference>
<dbReference type="SMR" id="Q899Q8"/>
<dbReference type="STRING" id="212717.CTC_00112"/>
<dbReference type="GeneID" id="24254411"/>
<dbReference type="KEGG" id="ctc:CTC_00112"/>
<dbReference type="HOGENOM" id="CLU_078938_3_0_9"/>
<dbReference type="OrthoDB" id="9788336at2"/>
<dbReference type="Proteomes" id="UP000001412">
    <property type="component" value="Chromosome"/>
</dbReference>
<dbReference type="GO" id="GO:1990904">
    <property type="term" value="C:ribonucleoprotein complex"/>
    <property type="evidence" value="ECO:0007669"/>
    <property type="project" value="UniProtKB-KW"/>
</dbReference>
<dbReference type="GO" id="GO:0005840">
    <property type="term" value="C:ribosome"/>
    <property type="evidence" value="ECO:0007669"/>
    <property type="project" value="UniProtKB-KW"/>
</dbReference>
<dbReference type="GO" id="GO:0019843">
    <property type="term" value="F:rRNA binding"/>
    <property type="evidence" value="ECO:0007669"/>
    <property type="project" value="UniProtKB-UniRule"/>
</dbReference>
<dbReference type="GO" id="GO:0003735">
    <property type="term" value="F:structural constituent of ribosome"/>
    <property type="evidence" value="ECO:0007669"/>
    <property type="project" value="InterPro"/>
</dbReference>
<dbReference type="GO" id="GO:0006412">
    <property type="term" value="P:translation"/>
    <property type="evidence" value="ECO:0007669"/>
    <property type="project" value="UniProtKB-UniRule"/>
</dbReference>
<dbReference type="FunFam" id="3.40.5.10:FF:000002">
    <property type="entry name" value="50S ribosomal protein L9"/>
    <property type="match status" value="1"/>
</dbReference>
<dbReference type="Gene3D" id="3.10.430.100">
    <property type="entry name" value="Ribosomal protein L9, C-terminal domain"/>
    <property type="match status" value="1"/>
</dbReference>
<dbReference type="Gene3D" id="3.40.5.10">
    <property type="entry name" value="Ribosomal protein L9, N-terminal domain"/>
    <property type="match status" value="1"/>
</dbReference>
<dbReference type="HAMAP" id="MF_00503">
    <property type="entry name" value="Ribosomal_bL9"/>
    <property type="match status" value="1"/>
</dbReference>
<dbReference type="InterPro" id="IPR000244">
    <property type="entry name" value="Ribosomal_bL9"/>
</dbReference>
<dbReference type="InterPro" id="IPR009027">
    <property type="entry name" value="Ribosomal_bL9/RNase_H1_N"/>
</dbReference>
<dbReference type="InterPro" id="IPR020594">
    <property type="entry name" value="Ribosomal_bL9_bac/chp"/>
</dbReference>
<dbReference type="InterPro" id="IPR020069">
    <property type="entry name" value="Ribosomal_bL9_C"/>
</dbReference>
<dbReference type="InterPro" id="IPR036791">
    <property type="entry name" value="Ribosomal_bL9_C_sf"/>
</dbReference>
<dbReference type="InterPro" id="IPR020070">
    <property type="entry name" value="Ribosomal_bL9_N"/>
</dbReference>
<dbReference type="InterPro" id="IPR036935">
    <property type="entry name" value="Ribosomal_bL9_N_sf"/>
</dbReference>
<dbReference type="NCBIfam" id="TIGR00158">
    <property type="entry name" value="L9"/>
    <property type="match status" value="1"/>
</dbReference>
<dbReference type="PANTHER" id="PTHR21368">
    <property type="entry name" value="50S RIBOSOMAL PROTEIN L9"/>
    <property type="match status" value="1"/>
</dbReference>
<dbReference type="Pfam" id="PF03948">
    <property type="entry name" value="Ribosomal_L9_C"/>
    <property type="match status" value="1"/>
</dbReference>
<dbReference type="Pfam" id="PF01281">
    <property type="entry name" value="Ribosomal_L9_N"/>
    <property type="match status" value="1"/>
</dbReference>
<dbReference type="SUPFAM" id="SSF55658">
    <property type="entry name" value="L9 N-domain-like"/>
    <property type="match status" value="1"/>
</dbReference>
<dbReference type="SUPFAM" id="SSF55653">
    <property type="entry name" value="Ribosomal protein L9 C-domain"/>
    <property type="match status" value="1"/>
</dbReference>
<keyword id="KW-1185">Reference proteome</keyword>
<keyword id="KW-0687">Ribonucleoprotein</keyword>
<keyword id="KW-0689">Ribosomal protein</keyword>
<keyword id="KW-0694">RNA-binding</keyword>
<keyword id="KW-0699">rRNA-binding</keyword>